<evidence type="ECO:0000255" key="1">
    <source>
        <dbReference type="HAMAP-Rule" id="MF_00046"/>
    </source>
</evidence>
<protein>
    <recommendedName>
        <fullName evidence="1">UDP-N-acetylmuramate--L-alanine ligase</fullName>
        <ecNumber evidence="1">6.3.2.8</ecNumber>
    </recommendedName>
    <alternativeName>
        <fullName evidence="1">UDP-N-acetylmuramoyl-L-alanine synthetase</fullName>
    </alternativeName>
</protein>
<organism>
    <name type="scientific">Bartonella henselae (strain ATCC 49882 / DSM 28221 / CCUG 30454 / Houston 1)</name>
    <name type="common">Rochalimaea henselae</name>
    <dbReference type="NCBI Taxonomy" id="283166"/>
    <lineage>
        <taxon>Bacteria</taxon>
        <taxon>Pseudomonadati</taxon>
        <taxon>Pseudomonadota</taxon>
        <taxon>Alphaproteobacteria</taxon>
        <taxon>Hyphomicrobiales</taxon>
        <taxon>Bartonellaceae</taxon>
        <taxon>Bartonella</taxon>
    </lineage>
</organism>
<gene>
    <name evidence="1" type="primary">murC</name>
    <name type="ordered locus">BH11230</name>
</gene>
<keyword id="KW-0067">ATP-binding</keyword>
<keyword id="KW-0131">Cell cycle</keyword>
<keyword id="KW-0132">Cell division</keyword>
<keyword id="KW-0133">Cell shape</keyword>
<keyword id="KW-0961">Cell wall biogenesis/degradation</keyword>
<keyword id="KW-0963">Cytoplasm</keyword>
<keyword id="KW-0436">Ligase</keyword>
<keyword id="KW-0547">Nucleotide-binding</keyword>
<keyword id="KW-0573">Peptidoglycan synthesis</keyword>
<accession>Q6G2Q6</accession>
<feature type="chain" id="PRO_0000182056" description="UDP-N-acetylmuramate--L-alanine ligase">
    <location>
        <begin position="1"/>
        <end position="475"/>
    </location>
</feature>
<feature type="binding site" evidence="1">
    <location>
        <begin position="114"/>
        <end position="120"/>
    </location>
    <ligand>
        <name>ATP</name>
        <dbReference type="ChEBI" id="CHEBI:30616"/>
    </ligand>
</feature>
<dbReference type="EC" id="6.3.2.8" evidence="1"/>
<dbReference type="EMBL" id="BX897699">
    <property type="protein sequence ID" value="CAF27908.1"/>
    <property type="molecule type" value="Genomic_DNA"/>
</dbReference>
<dbReference type="RefSeq" id="WP_011180971.1">
    <property type="nucleotide sequence ID" value="NC_005956.1"/>
</dbReference>
<dbReference type="SMR" id="Q6G2Q6"/>
<dbReference type="PaxDb" id="283166-BH11230"/>
<dbReference type="EnsemblBacteria" id="CAF27908">
    <property type="protein sequence ID" value="CAF27908"/>
    <property type="gene ID" value="BH11230"/>
</dbReference>
<dbReference type="GeneID" id="92985737"/>
<dbReference type="KEGG" id="bhe:BH11230"/>
<dbReference type="eggNOG" id="COG0773">
    <property type="taxonomic scope" value="Bacteria"/>
</dbReference>
<dbReference type="OrthoDB" id="9804126at2"/>
<dbReference type="UniPathway" id="UPA00219"/>
<dbReference type="Proteomes" id="UP000000421">
    <property type="component" value="Chromosome"/>
</dbReference>
<dbReference type="GO" id="GO:0005737">
    <property type="term" value="C:cytoplasm"/>
    <property type="evidence" value="ECO:0007669"/>
    <property type="project" value="UniProtKB-SubCell"/>
</dbReference>
<dbReference type="GO" id="GO:0005524">
    <property type="term" value="F:ATP binding"/>
    <property type="evidence" value="ECO:0007669"/>
    <property type="project" value="UniProtKB-UniRule"/>
</dbReference>
<dbReference type="GO" id="GO:0008763">
    <property type="term" value="F:UDP-N-acetylmuramate-L-alanine ligase activity"/>
    <property type="evidence" value="ECO:0007669"/>
    <property type="project" value="UniProtKB-UniRule"/>
</dbReference>
<dbReference type="GO" id="GO:0051301">
    <property type="term" value="P:cell division"/>
    <property type="evidence" value="ECO:0007669"/>
    <property type="project" value="UniProtKB-KW"/>
</dbReference>
<dbReference type="GO" id="GO:0071555">
    <property type="term" value="P:cell wall organization"/>
    <property type="evidence" value="ECO:0007669"/>
    <property type="project" value="UniProtKB-KW"/>
</dbReference>
<dbReference type="GO" id="GO:0009252">
    <property type="term" value="P:peptidoglycan biosynthetic process"/>
    <property type="evidence" value="ECO:0007669"/>
    <property type="project" value="UniProtKB-UniRule"/>
</dbReference>
<dbReference type="GO" id="GO:0008360">
    <property type="term" value="P:regulation of cell shape"/>
    <property type="evidence" value="ECO:0007669"/>
    <property type="project" value="UniProtKB-KW"/>
</dbReference>
<dbReference type="Gene3D" id="3.90.190.20">
    <property type="entry name" value="Mur ligase, C-terminal domain"/>
    <property type="match status" value="1"/>
</dbReference>
<dbReference type="Gene3D" id="3.40.1190.10">
    <property type="entry name" value="Mur-like, catalytic domain"/>
    <property type="match status" value="1"/>
</dbReference>
<dbReference type="Gene3D" id="3.40.50.720">
    <property type="entry name" value="NAD(P)-binding Rossmann-like Domain"/>
    <property type="match status" value="1"/>
</dbReference>
<dbReference type="HAMAP" id="MF_00046">
    <property type="entry name" value="MurC"/>
    <property type="match status" value="1"/>
</dbReference>
<dbReference type="InterPro" id="IPR036565">
    <property type="entry name" value="Mur-like_cat_sf"/>
</dbReference>
<dbReference type="InterPro" id="IPR004101">
    <property type="entry name" value="Mur_ligase_C"/>
</dbReference>
<dbReference type="InterPro" id="IPR036615">
    <property type="entry name" value="Mur_ligase_C_dom_sf"/>
</dbReference>
<dbReference type="InterPro" id="IPR013221">
    <property type="entry name" value="Mur_ligase_cen"/>
</dbReference>
<dbReference type="InterPro" id="IPR000713">
    <property type="entry name" value="Mur_ligase_N"/>
</dbReference>
<dbReference type="InterPro" id="IPR050061">
    <property type="entry name" value="MurCDEF_pg_biosynth"/>
</dbReference>
<dbReference type="InterPro" id="IPR005758">
    <property type="entry name" value="UDP-N-AcMur_Ala_ligase_MurC"/>
</dbReference>
<dbReference type="NCBIfam" id="TIGR01082">
    <property type="entry name" value="murC"/>
    <property type="match status" value="1"/>
</dbReference>
<dbReference type="PANTHER" id="PTHR43445:SF3">
    <property type="entry name" value="UDP-N-ACETYLMURAMATE--L-ALANINE LIGASE"/>
    <property type="match status" value="1"/>
</dbReference>
<dbReference type="PANTHER" id="PTHR43445">
    <property type="entry name" value="UDP-N-ACETYLMURAMATE--L-ALANINE LIGASE-RELATED"/>
    <property type="match status" value="1"/>
</dbReference>
<dbReference type="Pfam" id="PF01225">
    <property type="entry name" value="Mur_ligase"/>
    <property type="match status" value="1"/>
</dbReference>
<dbReference type="Pfam" id="PF02875">
    <property type="entry name" value="Mur_ligase_C"/>
    <property type="match status" value="1"/>
</dbReference>
<dbReference type="Pfam" id="PF08245">
    <property type="entry name" value="Mur_ligase_M"/>
    <property type="match status" value="1"/>
</dbReference>
<dbReference type="SUPFAM" id="SSF51984">
    <property type="entry name" value="MurCD N-terminal domain"/>
    <property type="match status" value="1"/>
</dbReference>
<dbReference type="SUPFAM" id="SSF53623">
    <property type="entry name" value="MurD-like peptide ligases, catalytic domain"/>
    <property type="match status" value="1"/>
</dbReference>
<dbReference type="SUPFAM" id="SSF53244">
    <property type="entry name" value="MurD-like peptide ligases, peptide-binding domain"/>
    <property type="match status" value="1"/>
</dbReference>
<sequence>MKMPLNIGLIHFVGIGGIGMSGIAEVFHNLGYKVQGSDQIDNANVKRLQDKGIQVHVGHHAENLGDAEFVVLSTAIKKTNPEYIAAKERHLPLVKRAEMLAELMRFRRAIAVGGTHGKTTTTSMIAALLDAGSFDPMVINGGIINAYGTNARMGEGDWMVVEADESDGTFLKLPADIAVVTNIDREHLDHYGSFAAVRDAFRQFVENVPFYGFAVLCIDHPEVQSLASRIDDRWVITYGANPQADIRFLNLSMDGQKTYFDVFMRSRKTGRETELKNLVLPMSGQHNVSNATAAIAIAHELGISNESIKKGLAGFGGVKRRFTQIGSWRGVEIFDDYGHHPVEIKAVLCAARESAKGRVIAIAQPHRYSRLYHLFDDFAACFNDADIVLIAPVYAAGEEPITGFGARELVEHIQMAGHRDVRLIDCLEDVVSIVSTFSKSGDYVVFLGAGNITQWACALPNQLAVFDNNDKFSAD</sequence>
<comment type="function">
    <text evidence="1">Cell wall formation.</text>
</comment>
<comment type="catalytic activity">
    <reaction evidence="1">
        <text>UDP-N-acetyl-alpha-D-muramate + L-alanine + ATP = UDP-N-acetyl-alpha-D-muramoyl-L-alanine + ADP + phosphate + H(+)</text>
        <dbReference type="Rhea" id="RHEA:23372"/>
        <dbReference type="ChEBI" id="CHEBI:15378"/>
        <dbReference type="ChEBI" id="CHEBI:30616"/>
        <dbReference type="ChEBI" id="CHEBI:43474"/>
        <dbReference type="ChEBI" id="CHEBI:57972"/>
        <dbReference type="ChEBI" id="CHEBI:70757"/>
        <dbReference type="ChEBI" id="CHEBI:83898"/>
        <dbReference type="ChEBI" id="CHEBI:456216"/>
        <dbReference type="EC" id="6.3.2.8"/>
    </reaction>
</comment>
<comment type="pathway">
    <text evidence="1">Cell wall biogenesis; peptidoglycan biosynthesis.</text>
</comment>
<comment type="subcellular location">
    <subcellularLocation>
        <location evidence="1">Cytoplasm</location>
    </subcellularLocation>
</comment>
<comment type="similarity">
    <text evidence="1">Belongs to the MurCDEF family.</text>
</comment>
<proteinExistence type="inferred from homology"/>
<name>MURC_BARHE</name>
<reference key="1">
    <citation type="journal article" date="2004" name="Proc. Natl. Acad. Sci. U.S.A.">
        <title>The louse-borne human pathogen Bartonella quintana is a genomic derivative of the zoonotic agent Bartonella henselae.</title>
        <authorList>
            <person name="Alsmark U.C.M."/>
            <person name="Frank A.C."/>
            <person name="Karlberg E.O."/>
            <person name="Legault B.-A."/>
            <person name="Ardell D.H."/>
            <person name="Canbaeck B."/>
            <person name="Eriksson A.-S."/>
            <person name="Naeslund A.K."/>
            <person name="Handley S.A."/>
            <person name="Huvet M."/>
            <person name="La Scola B."/>
            <person name="Holmberg M."/>
            <person name="Andersson S.G.E."/>
        </authorList>
    </citation>
    <scope>NUCLEOTIDE SEQUENCE [LARGE SCALE GENOMIC DNA]</scope>
    <source>
        <strain>ATCC 49882 / DSM 28221 / CCUG 30454 / Houston 1</strain>
    </source>
</reference>